<accession>O42196</accession>
<reference key="1">
    <citation type="journal article" date="1998" name="Biochim. Biophys. Acta">
        <title>A Xenopus cysteine string protein with a cysteine residue in the J domain.</title>
        <authorList>
            <person name="Mastrogiacomo A."/>
            <person name="Kornblum H.I."/>
            <person name="Umbach J.A."/>
            <person name="Gundersen C.B."/>
        </authorList>
    </citation>
    <scope>NUCLEOTIDE SEQUENCE [MRNA]</scope>
    <source>
        <tissue>Dorsal lip</tissue>
    </source>
</reference>
<sequence>MADQRQRSLSTSGESLYHVLGLDKNATTDDIKKCYRKLALKYHPDKNPDNPEASEKFKEINNAHGILADSTKRNIYDKYGSLGLYVAEQFGEENVNTYFVLSSWWAKALFMFCGLITGCYCCCCLCCCCNCCCGKCKPRPPEGEDQDIYVSPEDLEAQMQSDERDTEGPVLVQPASATETTQLTSDSHASYHTDGFN</sequence>
<protein>
    <recommendedName>
        <fullName evidence="2">DnaJ homolog subfamily C member 5</fullName>
    </recommendedName>
    <alternativeName>
        <fullName evidence="2">Cysteine string protein</fullName>
        <shortName evidence="2">CSP</shortName>
    </alternativeName>
    <alternativeName>
        <fullName evidence="5">Xcsp</fullName>
    </alternativeName>
</protein>
<name>DNJC5_XENLA</name>
<gene>
    <name evidence="2" type="primary">dnajc5</name>
</gene>
<organism>
    <name type="scientific">Xenopus laevis</name>
    <name type="common">African clawed frog</name>
    <dbReference type="NCBI Taxonomy" id="8355"/>
    <lineage>
        <taxon>Eukaryota</taxon>
        <taxon>Metazoa</taxon>
        <taxon>Chordata</taxon>
        <taxon>Craniata</taxon>
        <taxon>Vertebrata</taxon>
        <taxon>Euteleostomi</taxon>
        <taxon>Amphibia</taxon>
        <taxon>Batrachia</taxon>
        <taxon>Anura</taxon>
        <taxon>Pipoidea</taxon>
        <taxon>Pipidae</taxon>
        <taxon>Xenopodinae</taxon>
        <taxon>Xenopus</taxon>
        <taxon>Xenopus</taxon>
    </lineage>
</organism>
<comment type="function">
    <text>May have an important role in presynaptic function. May be involved in calcium-dependent neurotransmitter release at nerve endings.</text>
</comment>
<comment type="subcellular location">
    <subcellularLocation>
        <location evidence="1">Cytoplasm</location>
        <location evidence="1">Cytosol</location>
    </subcellularLocation>
    <subcellularLocation>
        <location evidence="1">Membrane</location>
        <topology evidence="1">Lipid-anchor</topology>
    </subcellularLocation>
    <subcellularLocation>
        <location evidence="1">Cytoplasmic vesicle</location>
        <location evidence="1">Secretory vesicle</location>
        <location evidence="1">Chromaffin granule membrane</location>
    </subcellularLocation>
    <subcellularLocation>
        <location evidence="2">Melanosome</location>
    </subcellularLocation>
    <subcellularLocation>
        <location evidence="2">Cell membrane</location>
    </subcellularLocation>
    <text evidence="1">The association with membranes is regulated by palmitoylation.</text>
</comment>
<comment type="PTM">
    <text evidence="1">Palmitoylated. Palmitoylation occurs probably in the cysteine-rich domain and regulates DNAJC5 stable membrane attachment.</text>
</comment>
<dbReference type="EMBL" id="AF015662">
    <property type="protein sequence ID" value="AAB69692.1"/>
    <property type="molecule type" value="mRNA"/>
</dbReference>
<dbReference type="RefSeq" id="NP_001083797.1">
    <property type="nucleotide sequence ID" value="NM_001090328.1"/>
</dbReference>
<dbReference type="RefSeq" id="XP_018092872.1">
    <property type="nucleotide sequence ID" value="XM_018237383.1"/>
</dbReference>
<dbReference type="RefSeq" id="XP_018092873.1">
    <property type="nucleotide sequence ID" value="XM_018237384.1"/>
</dbReference>
<dbReference type="RefSeq" id="XP_018092874.1">
    <property type="nucleotide sequence ID" value="XM_018237385.1"/>
</dbReference>
<dbReference type="SMR" id="O42196"/>
<dbReference type="GeneID" id="399123"/>
<dbReference type="KEGG" id="xla:399123"/>
<dbReference type="AGR" id="Xenbase:XB-GENE-6254416"/>
<dbReference type="CTD" id="399123"/>
<dbReference type="Xenbase" id="XB-GENE-6254416">
    <property type="gene designation" value="dnajc5.S"/>
</dbReference>
<dbReference type="OMA" id="CCLCCNF"/>
<dbReference type="OrthoDB" id="445556at2759"/>
<dbReference type="Proteomes" id="UP000186698">
    <property type="component" value="Chromosome 9_10S"/>
</dbReference>
<dbReference type="Bgee" id="399123">
    <property type="expression patterns" value="Expressed in brain and 19 other cell types or tissues"/>
</dbReference>
<dbReference type="GO" id="GO:0042584">
    <property type="term" value="C:chromaffin granule membrane"/>
    <property type="evidence" value="ECO:0007669"/>
    <property type="project" value="UniProtKB-SubCell"/>
</dbReference>
<dbReference type="GO" id="GO:0005829">
    <property type="term" value="C:cytosol"/>
    <property type="evidence" value="ECO:0000250"/>
    <property type="project" value="UniProtKB"/>
</dbReference>
<dbReference type="GO" id="GO:0043231">
    <property type="term" value="C:intracellular membrane-bounded organelle"/>
    <property type="evidence" value="ECO:0000318"/>
    <property type="project" value="GO_Central"/>
</dbReference>
<dbReference type="GO" id="GO:0042470">
    <property type="term" value="C:melanosome"/>
    <property type="evidence" value="ECO:0007669"/>
    <property type="project" value="UniProtKB-SubCell"/>
</dbReference>
<dbReference type="GO" id="GO:0016020">
    <property type="term" value="C:membrane"/>
    <property type="evidence" value="ECO:0000250"/>
    <property type="project" value="UniProtKB"/>
</dbReference>
<dbReference type="GO" id="GO:0005886">
    <property type="term" value="C:plasma membrane"/>
    <property type="evidence" value="ECO:0007669"/>
    <property type="project" value="UniProtKB-SubCell"/>
</dbReference>
<dbReference type="GO" id="GO:0098793">
    <property type="term" value="C:presynapse"/>
    <property type="evidence" value="ECO:0000318"/>
    <property type="project" value="GO_Central"/>
</dbReference>
<dbReference type="GO" id="GO:0061077">
    <property type="term" value="P:chaperone-mediated protein folding"/>
    <property type="evidence" value="ECO:0000318"/>
    <property type="project" value="GO_Central"/>
</dbReference>
<dbReference type="GO" id="GO:0098693">
    <property type="term" value="P:regulation of synaptic vesicle cycle"/>
    <property type="evidence" value="ECO:0000318"/>
    <property type="project" value="GO_Central"/>
</dbReference>
<dbReference type="CDD" id="cd06257">
    <property type="entry name" value="DnaJ"/>
    <property type="match status" value="1"/>
</dbReference>
<dbReference type="FunFam" id="1.10.287.110:FF:000017">
    <property type="entry name" value="dnaJ homolog subfamily C member 5"/>
    <property type="match status" value="1"/>
</dbReference>
<dbReference type="Gene3D" id="1.10.287.110">
    <property type="entry name" value="DnaJ domain"/>
    <property type="match status" value="1"/>
</dbReference>
<dbReference type="InterPro" id="IPR051434">
    <property type="entry name" value="DnaJ_C_subfamily_member5"/>
</dbReference>
<dbReference type="InterPro" id="IPR001623">
    <property type="entry name" value="DnaJ_domain"/>
</dbReference>
<dbReference type="InterPro" id="IPR036869">
    <property type="entry name" value="J_dom_sf"/>
</dbReference>
<dbReference type="PANTHER" id="PTHR44027:SF1">
    <property type="entry name" value="DNAJ HOMOLOG SUBFAMILY C MEMBER 5"/>
    <property type="match status" value="1"/>
</dbReference>
<dbReference type="PANTHER" id="PTHR44027">
    <property type="entry name" value="DNAJ HOMOLOG SUBFAMILY C MEMBER 5 HOMOLOG"/>
    <property type="match status" value="1"/>
</dbReference>
<dbReference type="Pfam" id="PF00226">
    <property type="entry name" value="DnaJ"/>
    <property type="match status" value="1"/>
</dbReference>
<dbReference type="PRINTS" id="PR00625">
    <property type="entry name" value="JDOMAIN"/>
</dbReference>
<dbReference type="SMART" id="SM00271">
    <property type="entry name" value="DnaJ"/>
    <property type="match status" value="1"/>
</dbReference>
<dbReference type="SUPFAM" id="SSF46565">
    <property type="entry name" value="Chaperone J-domain"/>
    <property type="match status" value="1"/>
</dbReference>
<dbReference type="PROSITE" id="PS50076">
    <property type="entry name" value="DNAJ_2"/>
    <property type="match status" value="1"/>
</dbReference>
<proteinExistence type="evidence at transcript level"/>
<feature type="chain" id="PRO_0000071074" description="DnaJ homolog subfamily C member 5">
    <location>
        <begin position="1"/>
        <end position="197"/>
    </location>
</feature>
<feature type="domain" description="J" evidence="3">
    <location>
        <begin position="13"/>
        <end position="82"/>
    </location>
</feature>
<feature type="region of interest" description="Disordered" evidence="4">
    <location>
        <begin position="153"/>
        <end position="197"/>
    </location>
</feature>
<feature type="compositionally biased region" description="Polar residues" evidence="4">
    <location>
        <begin position="175"/>
        <end position="197"/>
    </location>
</feature>
<keyword id="KW-1003">Cell membrane</keyword>
<keyword id="KW-0143">Chaperone</keyword>
<keyword id="KW-0963">Cytoplasm</keyword>
<keyword id="KW-0968">Cytoplasmic vesicle</keyword>
<keyword id="KW-0449">Lipoprotein</keyword>
<keyword id="KW-0472">Membrane</keyword>
<keyword id="KW-0564">Palmitate</keyword>
<keyword id="KW-1185">Reference proteome</keyword>
<evidence type="ECO:0000250" key="1">
    <source>
        <dbReference type="UniProtKB" id="Q29455"/>
    </source>
</evidence>
<evidence type="ECO:0000250" key="2">
    <source>
        <dbReference type="UniProtKB" id="Q9H3Z4"/>
    </source>
</evidence>
<evidence type="ECO:0000255" key="3">
    <source>
        <dbReference type="PROSITE-ProRule" id="PRU00286"/>
    </source>
</evidence>
<evidence type="ECO:0000256" key="4">
    <source>
        <dbReference type="SAM" id="MobiDB-lite"/>
    </source>
</evidence>
<evidence type="ECO:0000303" key="5">
    <source>
    </source>
</evidence>